<name>OTUBL_CAEBR</name>
<accession>A8XDJ2</accession>
<feature type="chain" id="PRO_0000394766" description="Ubiquitin thioesterase otubain-like">
    <location>
        <begin position="1"/>
        <end position="288"/>
    </location>
</feature>
<feature type="domain" description="OTU" evidence="7">
    <location>
        <begin position="76"/>
        <end position="275"/>
    </location>
</feature>
<feature type="active site" evidence="4">
    <location>
        <position position="84"/>
    </location>
</feature>
<feature type="active site" description="Nucleophile" evidence="3">
    <location>
        <position position="87"/>
    </location>
</feature>
<feature type="active site" evidence="4">
    <location>
        <position position="244"/>
    </location>
</feature>
<feature type="active site" evidence="4">
    <location>
        <position position="268"/>
    </location>
</feature>
<feature type="binding site" evidence="2">
    <location>
        <position position="175"/>
    </location>
    <ligand>
        <name>substrate</name>
    </ligand>
</feature>
<sequence>MVNDTSENQPTTAGIVTTTEDELILQDQQMKRIEDEQKASPLVGEKMPCATLVSLYDQETAPAFFEKANELAKVYSHIRFIRGDGNCFIRAIQVGLVEILLNDKERLVKFIASCKEWTERLVKLGFPDWTCTDFCEFFIEFIEKVRDGIHQKEDVFRIFNDDNTANYLLMFFRLITSGYLKEHAAEYEPFLDEGMSLAQYCETEIEAMWKESDHLGIIALVRALNIRIRIEYMDRNAAPNGGTHHNLPDGHDNATFTPDITLLYRPGHYDLIYKAPAETSKPALPPVA</sequence>
<reference evidence="8" key="1">
    <citation type="journal article" date="2003" name="PLoS Biol.">
        <title>The genome sequence of Caenorhabditis briggsae: a platform for comparative genomics.</title>
        <authorList>
            <person name="Stein L.D."/>
            <person name="Bao Z."/>
            <person name="Blasiar D."/>
            <person name="Blumenthal T."/>
            <person name="Brent M.R."/>
            <person name="Chen N."/>
            <person name="Chinwalla A."/>
            <person name="Clarke L."/>
            <person name="Clee C."/>
            <person name="Coghlan A."/>
            <person name="Coulson A."/>
            <person name="D'Eustachio P."/>
            <person name="Fitch D.H.A."/>
            <person name="Fulton L.A."/>
            <person name="Fulton R.E."/>
            <person name="Griffiths-Jones S."/>
            <person name="Harris T.W."/>
            <person name="Hillier L.W."/>
            <person name="Kamath R."/>
            <person name="Kuwabara P.E."/>
            <person name="Mardis E.R."/>
            <person name="Marra M.A."/>
            <person name="Miner T.L."/>
            <person name="Minx P."/>
            <person name="Mullikin J.C."/>
            <person name="Plumb R.W."/>
            <person name="Rogers J."/>
            <person name="Schein J.E."/>
            <person name="Sohrmann M."/>
            <person name="Spieth J."/>
            <person name="Stajich J.E."/>
            <person name="Wei C."/>
            <person name="Willey D."/>
            <person name="Wilson R.K."/>
            <person name="Durbin R.M."/>
            <person name="Waterston R.H."/>
        </authorList>
    </citation>
    <scope>NUCLEOTIDE SEQUENCE [LARGE SCALE GENOMIC DNA]</scope>
    <source>
        <strain>AF16</strain>
    </source>
</reference>
<keyword id="KW-0378">Hydrolase</keyword>
<keyword id="KW-0645">Protease</keyword>
<keyword id="KW-1185">Reference proteome</keyword>
<keyword id="KW-0788">Thiol protease</keyword>
<keyword id="KW-0833">Ubl conjugation pathway</keyword>
<protein>
    <recommendedName>
        <fullName evidence="5">Ubiquitin thioesterase otubain-like</fullName>
        <ecNumber evidence="3">3.4.19.12</ecNumber>
    </recommendedName>
    <alternativeName>
        <fullName evidence="5">Deubiquitinating enzyme otubain-like</fullName>
    </alternativeName>
    <alternativeName>
        <fullName evidence="5">Ubiquitin-specific-processing protease otubain-like</fullName>
    </alternativeName>
</protein>
<dbReference type="EC" id="3.4.19.12" evidence="3"/>
<dbReference type="EMBL" id="HE600985">
    <property type="protein sequence ID" value="CAP30711.1"/>
    <property type="molecule type" value="Genomic_DNA"/>
</dbReference>
<dbReference type="SMR" id="A8XDJ2"/>
<dbReference type="FunCoup" id="A8XDJ2">
    <property type="interactions" value="2490"/>
</dbReference>
<dbReference type="STRING" id="6238.A8XDJ2"/>
<dbReference type="MEROPS" id="C65.A01"/>
<dbReference type="EnsemblMetazoa" id="CBG11576.1">
    <property type="protein sequence ID" value="CBG11576.1"/>
    <property type="gene ID" value="WBGene00032679"/>
</dbReference>
<dbReference type="KEGG" id="cbr:CBG_11576"/>
<dbReference type="CTD" id="8579707"/>
<dbReference type="WormBase" id="CBG11576">
    <property type="protein sequence ID" value="CBP17228"/>
    <property type="gene ID" value="WBGene00032679"/>
    <property type="gene designation" value="Cbr-otub-1"/>
</dbReference>
<dbReference type="eggNOG" id="KOG3991">
    <property type="taxonomic scope" value="Eukaryota"/>
</dbReference>
<dbReference type="HOGENOM" id="CLU_014832_3_0_1"/>
<dbReference type="InParanoid" id="A8XDJ2"/>
<dbReference type="OMA" id="ADHVQIT"/>
<dbReference type="Proteomes" id="UP000008549">
    <property type="component" value="Unassembled WGS sequence"/>
</dbReference>
<dbReference type="GO" id="GO:0004843">
    <property type="term" value="F:cysteine-type deubiquitinase activity"/>
    <property type="evidence" value="ECO:0000318"/>
    <property type="project" value="GO_Central"/>
</dbReference>
<dbReference type="GO" id="GO:0043130">
    <property type="term" value="F:ubiquitin binding"/>
    <property type="evidence" value="ECO:0000318"/>
    <property type="project" value="GO_Central"/>
</dbReference>
<dbReference type="GO" id="GO:0016579">
    <property type="term" value="P:protein deubiquitination"/>
    <property type="evidence" value="ECO:0007669"/>
    <property type="project" value="InterPro"/>
</dbReference>
<dbReference type="GO" id="GO:0006508">
    <property type="term" value="P:proteolysis"/>
    <property type="evidence" value="ECO:0007669"/>
    <property type="project" value="UniProtKB-KW"/>
</dbReference>
<dbReference type="CDD" id="cd22749">
    <property type="entry name" value="Otubain_C65"/>
    <property type="match status" value="1"/>
</dbReference>
<dbReference type="FunFam" id="1.20.1300.20:FF:000005">
    <property type="entry name" value="Ubiquitin thioesterase otubain-like"/>
    <property type="match status" value="1"/>
</dbReference>
<dbReference type="Gene3D" id="3.30.200.60">
    <property type="entry name" value="Peptidase C65 Otubain, subdomain 1"/>
    <property type="match status" value="1"/>
</dbReference>
<dbReference type="Gene3D" id="1.20.1300.20">
    <property type="entry name" value="Peptidase C65 Otubain, subdomain 2"/>
    <property type="match status" value="1"/>
</dbReference>
<dbReference type="InterPro" id="IPR003323">
    <property type="entry name" value="OTU_dom"/>
</dbReference>
<dbReference type="InterPro" id="IPR016615">
    <property type="entry name" value="Otubain"/>
</dbReference>
<dbReference type="InterPro" id="IPR038765">
    <property type="entry name" value="Papain-like_cys_pep_sf"/>
</dbReference>
<dbReference type="InterPro" id="IPR019400">
    <property type="entry name" value="Peptidase_C65_otubain"/>
</dbReference>
<dbReference type="InterPro" id="IPR042468">
    <property type="entry name" value="Peptidase_C65_otubain_sub1"/>
</dbReference>
<dbReference type="InterPro" id="IPR042467">
    <property type="entry name" value="Peptidase_C65_otubain_sub2"/>
</dbReference>
<dbReference type="PANTHER" id="PTHR12931:SF15">
    <property type="entry name" value="UBIQUITIN THIOESTERASE OTUBAIN-LIKE"/>
    <property type="match status" value="1"/>
</dbReference>
<dbReference type="PANTHER" id="PTHR12931">
    <property type="entry name" value="UBIQUITIN THIOLESTERASE PROTEIN OTUB"/>
    <property type="match status" value="1"/>
</dbReference>
<dbReference type="Pfam" id="PF10275">
    <property type="entry name" value="Peptidase_C65"/>
    <property type="match status" value="1"/>
</dbReference>
<dbReference type="PIRSF" id="PIRSF013503">
    <property type="entry name" value="Ubiquitin_thioesterase_Otubain"/>
    <property type="match status" value="1"/>
</dbReference>
<dbReference type="SUPFAM" id="SSF54001">
    <property type="entry name" value="Cysteine proteinases"/>
    <property type="match status" value="1"/>
</dbReference>
<dbReference type="PROSITE" id="PS50802">
    <property type="entry name" value="OTU"/>
    <property type="match status" value="1"/>
</dbReference>
<proteinExistence type="inferred from homology"/>
<evidence type="ECO:0000250" key="1"/>
<evidence type="ECO:0000250" key="2">
    <source>
        <dbReference type="UniProtKB" id="Q5VVQ6"/>
    </source>
</evidence>
<evidence type="ECO:0000250" key="3">
    <source>
        <dbReference type="UniProtKB" id="Q96DC9"/>
    </source>
</evidence>
<evidence type="ECO:0000250" key="4">
    <source>
        <dbReference type="UniProtKB" id="Q96FW1"/>
    </source>
</evidence>
<evidence type="ECO:0000250" key="5">
    <source>
        <dbReference type="UniProtKB" id="Q9XVR6"/>
    </source>
</evidence>
<evidence type="ECO:0000255" key="6"/>
<evidence type="ECO:0000255" key="7">
    <source>
        <dbReference type="PROSITE-ProRule" id="PRU00139"/>
    </source>
</evidence>
<evidence type="ECO:0000312" key="8">
    <source>
        <dbReference type="EMBL" id="CAP30711.1"/>
    </source>
</evidence>
<comment type="function">
    <text evidence="1">Hydrolase that can remove conjugated ubiquitin from proteins and plays an important regulatory role at the level of protein turnover by preventing degradation. Specifically cleaves 'Lys-48'-linked polyubiquitin (By similarity).</text>
</comment>
<comment type="catalytic activity">
    <reaction evidence="3">
        <text>Thiol-dependent hydrolysis of ester, thioester, amide, peptide and isopeptide bonds formed by the C-terminal Gly of ubiquitin (a 76-residue protein attached to proteins as an intracellular targeting signal).</text>
        <dbReference type="EC" id="3.4.19.12"/>
    </reaction>
</comment>
<comment type="similarity">
    <text evidence="6">Belongs to the peptidase C65 family.</text>
</comment>
<gene>
    <name evidence="8" type="primary">otub-1</name>
    <name type="ORF">CBG11576</name>
</gene>
<organism>
    <name type="scientific">Caenorhabditis briggsae</name>
    <dbReference type="NCBI Taxonomy" id="6238"/>
    <lineage>
        <taxon>Eukaryota</taxon>
        <taxon>Metazoa</taxon>
        <taxon>Ecdysozoa</taxon>
        <taxon>Nematoda</taxon>
        <taxon>Chromadorea</taxon>
        <taxon>Rhabditida</taxon>
        <taxon>Rhabditina</taxon>
        <taxon>Rhabditomorpha</taxon>
        <taxon>Rhabditoidea</taxon>
        <taxon>Rhabditidae</taxon>
        <taxon>Peloderinae</taxon>
        <taxon>Caenorhabditis</taxon>
    </lineage>
</organism>